<gene>
    <name type="ORF">AAEL011283</name>
</gene>
<feature type="chain" id="PRO_0000368241" description="Cytoplasmic tRNA 2-thiolation protein 1">
    <location>
        <begin position="1"/>
        <end position="341"/>
    </location>
</feature>
<protein>
    <recommendedName>
        <fullName evidence="1">Cytoplasmic tRNA 2-thiolation protein 1</fullName>
        <ecNumber evidence="1">2.7.7.-</ecNumber>
    </recommendedName>
    <alternativeName>
        <fullName evidence="1">Cytoplasmic tRNA adenylyltransferase 1</fullName>
    </alternativeName>
</protein>
<evidence type="ECO:0000255" key="1">
    <source>
        <dbReference type="HAMAP-Rule" id="MF_03053"/>
    </source>
</evidence>
<keyword id="KW-0963">Cytoplasm</keyword>
<keyword id="KW-1185">Reference proteome</keyword>
<keyword id="KW-0694">RNA-binding</keyword>
<keyword id="KW-0808">Transferase</keyword>
<keyword id="KW-0819">tRNA processing</keyword>
<keyword id="KW-0820">tRNA-binding</keyword>
<proteinExistence type="inferred from homology"/>
<reference key="1">
    <citation type="journal article" date="2007" name="Science">
        <title>Genome sequence of Aedes aegypti, a major arbovirus vector.</title>
        <authorList>
            <person name="Nene V."/>
            <person name="Wortman J.R."/>
            <person name="Lawson D."/>
            <person name="Haas B.J."/>
            <person name="Kodira C.D."/>
            <person name="Tu Z.J."/>
            <person name="Loftus B.J."/>
            <person name="Xi Z."/>
            <person name="Megy K."/>
            <person name="Grabherr M."/>
            <person name="Ren Q."/>
            <person name="Zdobnov E.M."/>
            <person name="Lobo N.F."/>
            <person name="Campbell K.S."/>
            <person name="Brown S.E."/>
            <person name="Bonaldo M.F."/>
            <person name="Zhu J."/>
            <person name="Sinkins S.P."/>
            <person name="Hogenkamp D.G."/>
            <person name="Amedeo P."/>
            <person name="Arensburger P."/>
            <person name="Atkinson P.W."/>
            <person name="Bidwell S.L."/>
            <person name="Biedler J."/>
            <person name="Birney E."/>
            <person name="Bruggner R.V."/>
            <person name="Costas J."/>
            <person name="Coy M.R."/>
            <person name="Crabtree J."/>
            <person name="Crawford M."/>
            <person name="DeBruyn B."/>
            <person name="DeCaprio D."/>
            <person name="Eiglmeier K."/>
            <person name="Eisenstadt E."/>
            <person name="El-Dorry H."/>
            <person name="Gelbart W.M."/>
            <person name="Gomes S.L."/>
            <person name="Hammond M."/>
            <person name="Hannick L.I."/>
            <person name="Hogan J.R."/>
            <person name="Holmes M.H."/>
            <person name="Jaffe D."/>
            <person name="Johnston S.J."/>
            <person name="Kennedy R.C."/>
            <person name="Koo H."/>
            <person name="Kravitz S."/>
            <person name="Kriventseva E.V."/>
            <person name="Kulp D."/>
            <person name="Labutti K."/>
            <person name="Lee E."/>
            <person name="Li S."/>
            <person name="Lovin D.D."/>
            <person name="Mao C."/>
            <person name="Mauceli E."/>
            <person name="Menck C.F."/>
            <person name="Miller J.R."/>
            <person name="Montgomery P."/>
            <person name="Mori A."/>
            <person name="Nascimento A.L."/>
            <person name="Naveira H.F."/>
            <person name="Nusbaum C."/>
            <person name="O'Leary S.B."/>
            <person name="Orvis J."/>
            <person name="Pertea M."/>
            <person name="Quesneville H."/>
            <person name="Reidenbach K.R."/>
            <person name="Rogers Y.-H.C."/>
            <person name="Roth C.W."/>
            <person name="Schneider J.R."/>
            <person name="Schatz M."/>
            <person name="Shumway M."/>
            <person name="Stanke M."/>
            <person name="Stinson E.O."/>
            <person name="Tubio J.M.C."/>
            <person name="Vanzee J.P."/>
            <person name="Verjovski-Almeida S."/>
            <person name="Werner D."/>
            <person name="White O.R."/>
            <person name="Wyder S."/>
            <person name="Zeng Q."/>
            <person name="Zhao Q."/>
            <person name="Zhao Y."/>
            <person name="Hill C.A."/>
            <person name="Raikhel A.S."/>
            <person name="Soares M.B."/>
            <person name="Knudson D.L."/>
            <person name="Lee N.H."/>
            <person name="Galagan J."/>
            <person name="Salzberg S.L."/>
            <person name="Paulsen I.T."/>
            <person name="Dimopoulos G."/>
            <person name="Collins F.H."/>
            <person name="Bruce B."/>
            <person name="Fraser-Liggett C.M."/>
            <person name="Severson D.W."/>
        </authorList>
    </citation>
    <scope>NUCLEOTIDE SEQUENCE [LARGE SCALE GENOMIC DNA]</scope>
    <source>
        <strain>LVPib12</strain>
    </source>
</reference>
<sequence length="341" mass="38375">MPILCTTGCSRKAFLKRPKTGDTLCRECFFLAFETEIHNTIEQNKLFRRGDVVAIAASGGKDSTVLAHVLKVLNERYDYGLKLVLLSIDEGITGYRDDSLETVKRNRDDYGMELKILSYDELYGWTMDKIVSKIGRSNNCTFCGVFRRQALDRGARLMEVDCVATGHNADDIAETVLMNILRGDTARLRRCCDIKTGGKDADSIPRVKPLKYAYEKEIVMYAHFKKLVYFSTECVFAPNAYRGHARAFLKDLERIRPSVIMDIIHSGEQLSFKDTVKKPLRGKCNRCGFVSSQQPCKACVLLEGLNRGLPKLGVGKKSKANRMIAAQNSLRQSANLVKTDF</sequence>
<organism>
    <name type="scientific">Aedes aegypti</name>
    <name type="common">Yellowfever mosquito</name>
    <name type="synonym">Culex aegypti</name>
    <dbReference type="NCBI Taxonomy" id="7159"/>
    <lineage>
        <taxon>Eukaryota</taxon>
        <taxon>Metazoa</taxon>
        <taxon>Ecdysozoa</taxon>
        <taxon>Arthropoda</taxon>
        <taxon>Hexapoda</taxon>
        <taxon>Insecta</taxon>
        <taxon>Pterygota</taxon>
        <taxon>Neoptera</taxon>
        <taxon>Endopterygota</taxon>
        <taxon>Diptera</taxon>
        <taxon>Nematocera</taxon>
        <taxon>Culicoidea</taxon>
        <taxon>Culicidae</taxon>
        <taxon>Culicinae</taxon>
        <taxon>Aedini</taxon>
        <taxon>Aedes</taxon>
        <taxon>Stegomyia</taxon>
    </lineage>
</organism>
<accession>Q16QI1</accession>
<dbReference type="EC" id="2.7.7.-" evidence="1"/>
<dbReference type="EMBL" id="CH477747">
    <property type="protein sequence ID" value="EAT36659.1"/>
    <property type="molecule type" value="Genomic_DNA"/>
</dbReference>
<dbReference type="SMR" id="Q16QI1"/>
<dbReference type="FunCoup" id="Q16QI1">
    <property type="interactions" value="419"/>
</dbReference>
<dbReference type="STRING" id="7159.Q16QI1"/>
<dbReference type="PaxDb" id="7159-AAEL011283-PA"/>
<dbReference type="EnsemblMetazoa" id="AAEL011283-RA">
    <property type="protein sequence ID" value="AAEL011283-PA"/>
    <property type="gene ID" value="AAEL011283"/>
</dbReference>
<dbReference type="EnsemblMetazoa" id="AAEL011283-RB">
    <property type="protein sequence ID" value="AAEL011283-PB"/>
    <property type="gene ID" value="AAEL011283"/>
</dbReference>
<dbReference type="GeneID" id="5574642"/>
<dbReference type="KEGG" id="aag:5574642"/>
<dbReference type="CTD" id="90353"/>
<dbReference type="VEuPathDB" id="VectorBase:AAEL011283"/>
<dbReference type="eggNOG" id="KOG2840">
    <property type="taxonomic scope" value="Eukaryota"/>
</dbReference>
<dbReference type="HOGENOM" id="CLU_026481_1_2_1"/>
<dbReference type="InParanoid" id="Q16QI1"/>
<dbReference type="OMA" id="KPVRGIC"/>
<dbReference type="OrthoDB" id="198857at2759"/>
<dbReference type="PhylomeDB" id="Q16QI1"/>
<dbReference type="UniPathway" id="UPA00988"/>
<dbReference type="Proteomes" id="UP000008820">
    <property type="component" value="Chromosome 2"/>
</dbReference>
<dbReference type="Proteomes" id="UP000682892">
    <property type="component" value="Unassembled WGS sequence"/>
</dbReference>
<dbReference type="GO" id="GO:0005829">
    <property type="term" value="C:cytosol"/>
    <property type="evidence" value="ECO:0000250"/>
    <property type="project" value="UniProtKB"/>
</dbReference>
<dbReference type="GO" id="GO:0002144">
    <property type="term" value="C:cytosolic tRNA wobble base thiouridylase complex"/>
    <property type="evidence" value="ECO:0007669"/>
    <property type="project" value="TreeGrafter"/>
</dbReference>
<dbReference type="GO" id="GO:0005739">
    <property type="term" value="C:mitochondrion"/>
    <property type="evidence" value="ECO:0007669"/>
    <property type="project" value="TreeGrafter"/>
</dbReference>
<dbReference type="GO" id="GO:0016779">
    <property type="term" value="F:nucleotidyltransferase activity"/>
    <property type="evidence" value="ECO:0007669"/>
    <property type="project" value="UniProtKB-UniRule"/>
</dbReference>
<dbReference type="GO" id="GO:0000049">
    <property type="term" value="F:tRNA binding"/>
    <property type="evidence" value="ECO:0000250"/>
    <property type="project" value="UniProtKB"/>
</dbReference>
<dbReference type="GO" id="GO:0032447">
    <property type="term" value="P:protein urmylation"/>
    <property type="evidence" value="ECO:0007669"/>
    <property type="project" value="UniProtKB-UniRule"/>
</dbReference>
<dbReference type="GO" id="GO:0034227">
    <property type="term" value="P:tRNA thio-modification"/>
    <property type="evidence" value="ECO:0000250"/>
    <property type="project" value="UniProtKB"/>
</dbReference>
<dbReference type="GO" id="GO:0002143">
    <property type="term" value="P:tRNA wobble position uridine thiolation"/>
    <property type="evidence" value="ECO:0007669"/>
    <property type="project" value="TreeGrafter"/>
</dbReference>
<dbReference type="GO" id="GO:0002098">
    <property type="term" value="P:tRNA wobble uridine modification"/>
    <property type="evidence" value="ECO:0000250"/>
    <property type="project" value="UniProtKB"/>
</dbReference>
<dbReference type="CDD" id="cd01713">
    <property type="entry name" value="CTU1-like"/>
    <property type="match status" value="1"/>
</dbReference>
<dbReference type="FunFam" id="3.40.50.620:FF:000054">
    <property type="entry name" value="Cytoplasmic tRNA 2-thiolation protein 1"/>
    <property type="match status" value="1"/>
</dbReference>
<dbReference type="Gene3D" id="3.40.50.620">
    <property type="entry name" value="HUPs"/>
    <property type="match status" value="1"/>
</dbReference>
<dbReference type="HAMAP" id="MF_03053">
    <property type="entry name" value="CTU1"/>
    <property type="match status" value="1"/>
</dbReference>
<dbReference type="InterPro" id="IPR056369">
    <property type="entry name" value="CTU1-like_ATP-bd"/>
</dbReference>
<dbReference type="InterPro" id="IPR032442">
    <property type="entry name" value="CTU1_C"/>
</dbReference>
<dbReference type="InterPro" id="IPR000541">
    <property type="entry name" value="Ncs6/Tuc1/Ctu1"/>
</dbReference>
<dbReference type="InterPro" id="IPR014729">
    <property type="entry name" value="Rossmann-like_a/b/a_fold"/>
</dbReference>
<dbReference type="InterPro" id="IPR011063">
    <property type="entry name" value="TilS/TtcA_N"/>
</dbReference>
<dbReference type="InterPro" id="IPR035107">
    <property type="entry name" value="tRNA_thiolation_TtcA_Ctu1"/>
</dbReference>
<dbReference type="NCBIfam" id="TIGR00269">
    <property type="entry name" value="TIGR00269 family protein"/>
    <property type="match status" value="1"/>
</dbReference>
<dbReference type="PANTHER" id="PTHR11807">
    <property type="entry name" value="ATPASES OF THE PP SUPERFAMILY-RELATED"/>
    <property type="match status" value="1"/>
</dbReference>
<dbReference type="PANTHER" id="PTHR11807:SF12">
    <property type="entry name" value="CYTOPLASMIC TRNA 2-THIOLATION PROTEIN 1"/>
    <property type="match status" value="1"/>
</dbReference>
<dbReference type="Pfam" id="PF01171">
    <property type="entry name" value="ATP_bind_3"/>
    <property type="match status" value="1"/>
</dbReference>
<dbReference type="Pfam" id="PF16503">
    <property type="entry name" value="zn-ribbon_14"/>
    <property type="match status" value="1"/>
</dbReference>
<dbReference type="PIRSF" id="PIRSF004976">
    <property type="entry name" value="ATPase_YdaO"/>
    <property type="match status" value="1"/>
</dbReference>
<dbReference type="SUPFAM" id="SSF52402">
    <property type="entry name" value="Adenine nucleotide alpha hydrolases-like"/>
    <property type="match status" value="1"/>
</dbReference>
<comment type="function">
    <text evidence="1">Plays a central role in 2-thiolation of mcm(5)S(2)U at tRNA wobble positions of tRNA(Lys), tRNA(Glu) and tRNA(Gln). Directly binds tRNAs and probably acts by catalyzing adenylation of tRNAs, an intermediate required for 2-thiolation. It is unclear whether it acts as a sulfurtransferase that transfers sulfur from thiocarboxylated URM1 onto the uridine of tRNAs at wobble position.</text>
</comment>
<comment type="pathway">
    <text evidence="1">tRNA modification; 5-methoxycarbonylmethyl-2-thiouridine-tRNA biosynthesis.</text>
</comment>
<comment type="subcellular location">
    <subcellularLocation>
        <location evidence="1">Cytoplasm</location>
    </subcellularLocation>
</comment>
<comment type="similarity">
    <text evidence="1">Belongs to the TtcA family. CTU1/NCS6/ATPBD3 subfamily.</text>
</comment>
<name>CTU1_AEDAE</name>